<name>MHPA_ECOLI</name>
<comment type="function">
    <text evidence="3">Catalyzes the insertion of one atom of molecular oxygen into position 2 of the phenyl ring of 3-(3-hydroxyphenyl)propionate (3-HPP) and hydroxycinnamic acid (3HCI).</text>
</comment>
<comment type="catalytic activity">
    <reaction>
        <text>3-(3-hydroxyphenyl)propanoate + NADH + O2 + H(+) = 3-(2,3-dihydroxyphenyl)propanoate + NAD(+) + H2O</text>
        <dbReference type="Rhea" id="RHEA:24785"/>
        <dbReference type="ChEBI" id="CHEBI:15377"/>
        <dbReference type="ChEBI" id="CHEBI:15378"/>
        <dbReference type="ChEBI" id="CHEBI:15379"/>
        <dbReference type="ChEBI" id="CHEBI:46951"/>
        <dbReference type="ChEBI" id="CHEBI:57277"/>
        <dbReference type="ChEBI" id="CHEBI:57540"/>
        <dbReference type="ChEBI" id="CHEBI:57945"/>
        <dbReference type="EC" id="1.14.13.127"/>
    </reaction>
</comment>
<comment type="catalytic activity">
    <reaction>
        <text>(2E)-3-(3-hydroxyphenyl)prop-2-enoate + NADH + O2 + H(+) = (2E)-3-(2,3-dihydroxyphenyl)prop-2-enoate + NAD(+) + H2O</text>
        <dbReference type="Rhea" id="RHEA:27846"/>
        <dbReference type="ChEBI" id="CHEBI:15377"/>
        <dbReference type="ChEBI" id="CHEBI:15378"/>
        <dbReference type="ChEBI" id="CHEBI:15379"/>
        <dbReference type="ChEBI" id="CHEBI:47928"/>
        <dbReference type="ChEBI" id="CHEBI:57540"/>
        <dbReference type="ChEBI" id="CHEBI:57945"/>
        <dbReference type="ChEBI" id="CHEBI:58642"/>
        <dbReference type="EC" id="1.14.13.127"/>
    </reaction>
</comment>
<comment type="cofactor">
    <cofactor evidence="1">
        <name>FAD</name>
        <dbReference type="ChEBI" id="CHEBI:57692"/>
    </cofactor>
</comment>
<comment type="pathway">
    <text>Aromatic compound metabolism; 3-phenylpropanoate degradation.</text>
</comment>
<comment type="similarity">
    <text evidence="4">Belongs to the PheA/TfdB FAD monooxygenase family.</text>
</comment>
<proteinExistence type="evidence at protein level"/>
<organism>
    <name type="scientific">Escherichia coli (strain K12)</name>
    <dbReference type="NCBI Taxonomy" id="83333"/>
    <lineage>
        <taxon>Bacteria</taxon>
        <taxon>Pseudomonadati</taxon>
        <taxon>Pseudomonadota</taxon>
        <taxon>Gammaproteobacteria</taxon>
        <taxon>Enterobacterales</taxon>
        <taxon>Enterobacteriaceae</taxon>
        <taxon>Escherichia</taxon>
    </lineage>
</organism>
<keyword id="KW-0058">Aromatic hydrocarbons catabolism</keyword>
<keyword id="KW-0274">FAD</keyword>
<keyword id="KW-0285">Flavoprotein</keyword>
<keyword id="KW-0520">NAD</keyword>
<keyword id="KW-0560">Oxidoreductase</keyword>
<keyword id="KW-1185">Reference proteome</keyword>
<feature type="chain" id="PRO_0000214043" description="3-(3-hydroxy-phenyl)propionate/3-hydroxycinnamic acid hydroxylase">
    <location>
        <begin position="1"/>
        <end position="554"/>
    </location>
</feature>
<feature type="binding site" evidence="2">
    <location>
        <begin position="17"/>
        <end position="46"/>
    </location>
    <ligand>
        <name>FAD</name>
        <dbReference type="ChEBI" id="CHEBI:57692"/>
    </ligand>
</feature>
<feature type="binding site" evidence="2">
    <location>
        <begin position="285"/>
        <end position="295"/>
    </location>
    <ligand>
        <name>FAD</name>
        <dbReference type="ChEBI" id="CHEBI:57692"/>
    </ligand>
</feature>
<feature type="sequence conflict" description="In Ref. 1; BAA13052." evidence="4" ref="1">
    <original>Q</original>
    <variation>H</variation>
    <location>
        <position position="272"/>
    </location>
</feature>
<feature type="sequence conflict" description="In Ref. 1; BAA13052." evidence="4" ref="1">
    <original>L</original>
    <variation>P</variation>
    <location>
        <position position="360"/>
    </location>
</feature>
<feature type="sequence conflict" description="In Ref. 1; BAA13052." evidence="4" ref="1">
    <original>W</original>
    <variation>G</variation>
    <location>
        <position position="502"/>
    </location>
</feature>
<evidence type="ECO:0000250" key="1"/>
<evidence type="ECO:0000255" key="2"/>
<evidence type="ECO:0000269" key="3">
    <source>
    </source>
</evidence>
<evidence type="ECO:0000305" key="4"/>
<reference key="1">
    <citation type="submission" date="1996-06" db="EMBL/GenBank/DDBJ databases">
        <title>Complete sequence of the mhp operon.</title>
        <authorList>
            <person name="Kawamukai M."/>
        </authorList>
    </citation>
    <scope>NUCLEOTIDE SEQUENCE [GENOMIC DNA]</scope>
    <source>
        <strain>K12 / W3110 / ATCC 27325 / DSM 5911</strain>
    </source>
</reference>
<reference key="2">
    <citation type="journal article" date="1997" name="J. Bacteriol.">
        <title>Genetic characterization and expression in heterologous hosts of the 3-(3-hydroxyphenyl)propionate catabolic pathway of Escherichia coli K-12.</title>
        <authorList>
            <person name="Ferrandez A."/>
            <person name="Garcia J.L."/>
            <person name="Diaz E."/>
        </authorList>
    </citation>
    <scope>NUCLEOTIDE SEQUENCE [GENOMIC DNA]</scope>
    <source>
        <strain>K12 / CS520</strain>
    </source>
</reference>
<reference key="3">
    <citation type="submission" date="1997-01" db="EMBL/GenBank/DDBJ databases">
        <title>Sequence of minutes 4-25 of Escherichia coli.</title>
        <authorList>
            <person name="Chung E."/>
            <person name="Allen E."/>
            <person name="Araujo R."/>
            <person name="Aparicio A.M."/>
            <person name="Davis K."/>
            <person name="Duncan M."/>
            <person name="Federspiel N."/>
            <person name="Hyman R."/>
            <person name="Kalman S."/>
            <person name="Komp C."/>
            <person name="Kurdi O."/>
            <person name="Lew H."/>
            <person name="Lin D."/>
            <person name="Namath A."/>
            <person name="Oefner P."/>
            <person name="Roberts D."/>
            <person name="Schramm S."/>
            <person name="Davis R.W."/>
        </authorList>
    </citation>
    <scope>NUCLEOTIDE SEQUENCE [LARGE SCALE GENOMIC DNA]</scope>
    <source>
        <strain>K12 / MG1655 / ATCC 47076</strain>
    </source>
</reference>
<reference key="4">
    <citation type="journal article" date="1997" name="Science">
        <title>The complete genome sequence of Escherichia coli K-12.</title>
        <authorList>
            <person name="Blattner F.R."/>
            <person name="Plunkett G. III"/>
            <person name="Bloch C.A."/>
            <person name="Perna N.T."/>
            <person name="Burland V."/>
            <person name="Riley M."/>
            <person name="Collado-Vides J."/>
            <person name="Glasner J.D."/>
            <person name="Rode C.K."/>
            <person name="Mayhew G.F."/>
            <person name="Gregor J."/>
            <person name="Davis N.W."/>
            <person name="Kirkpatrick H.A."/>
            <person name="Goeden M.A."/>
            <person name="Rose D.J."/>
            <person name="Mau B."/>
            <person name="Shao Y."/>
        </authorList>
    </citation>
    <scope>NUCLEOTIDE SEQUENCE [LARGE SCALE GENOMIC DNA]</scope>
    <source>
        <strain>K12 / MG1655 / ATCC 47076</strain>
    </source>
</reference>
<reference key="5">
    <citation type="journal article" date="2006" name="Mol. Syst. Biol.">
        <title>Highly accurate genome sequences of Escherichia coli K-12 strains MG1655 and W3110.</title>
        <authorList>
            <person name="Hayashi K."/>
            <person name="Morooka N."/>
            <person name="Yamamoto Y."/>
            <person name="Fujita K."/>
            <person name="Isono K."/>
            <person name="Choi S."/>
            <person name="Ohtsubo E."/>
            <person name="Baba T."/>
            <person name="Wanner B.L."/>
            <person name="Mori H."/>
            <person name="Horiuchi T."/>
        </authorList>
    </citation>
    <scope>NUCLEOTIDE SEQUENCE [LARGE SCALE GENOMIC DNA]</scope>
    <source>
        <strain>K12 / W3110 / ATCC 27325 / DSM 5911</strain>
    </source>
</reference>
<reference key="6">
    <citation type="journal article" date="1998" name="J. Bacteriol.">
        <title>Characterization of the hca cluster encoding the dioxygenolytic pathway for initial catabolism of 3-phenylpropionic acid in Escherichia coli K-12.</title>
        <authorList>
            <person name="Diaz E."/>
            <person name="Ferrandez A."/>
            <person name="Garcia J.L."/>
        </authorList>
    </citation>
    <scope>FUNCTION IN CATABOLISM OF 3-HYDROXY DERIVATIVES OF PHENYLPROPIONIC ACID</scope>
</reference>
<accession>P77397</accession>
<accession>P71203</accession>
<accession>P77047</accession>
<accession>Q2MC77</accession>
<protein>
    <recommendedName>
        <fullName>3-(3-hydroxy-phenyl)propionate/3-hydroxycinnamic acid hydroxylase</fullName>
        <shortName>3-HCI hydroxylase</shortName>
        <shortName>3-HPP hydroxylase</shortName>
        <ecNumber>1.14.13.127</ecNumber>
    </recommendedName>
</protein>
<sequence length="554" mass="62186">MAIQHPDIQPAVNHSVQVAIAGAGPVGLMMANYLGQMGIDVLVVEKLDKLIDYPRAIGIDDEALRTMQSVGLVDDVLPHTTPWHAMRFLTPKGRCFADIQPMTDEFGWPRRNAFIQPQVDAVMLEGVSRFPNVRCLFSRELEAFSQQDDEVTLHLKTAEGQREIVKAQWLVACDGGASFVRRTLNVPFEGKTAPNQWIVVDIANDPLSTPHIYLCCDPVRPYVSAALPHAVRRFEFMVMPGETEEQLREPQNMRKLLSKVLPNPDNVELIRQRVYTHNARLAQRFRIDRVLLAGDAAHIMPVWQGQGYNSGMRDAFNLAWKLALVIQGKARDALLDTYQQERRDHAKAMIDLSVTAGNVLAPPKRWQGTLRDGVSWLLNYLPPVKRYFLEMRFKPMPQYYGGALMREGEAKHSPVGKMFIQPKVTLENGDVTLLDNAIGANFAVIGWGCNPLWGMSDEQIQQWRALGTRFIQVVPEVQIHTAQDNHDGVLRVGDTQGRLRSWFAQHNASLVVMRPDRFVAATAIPQTLGKTLNKLASVMTLTRPDADVSVEKVA</sequence>
<dbReference type="EC" id="1.14.13.127"/>
<dbReference type="EMBL" id="D86239">
    <property type="protein sequence ID" value="BAA13052.1"/>
    <property type="molecule type" value="Genomic_DNA"/>
</dbReference>
<dbReference type="EMBL" id="Y09555">
    <property type="protein sequence ID" value="CAA70747.1"/>
    <property type="molecule type" value="Genomic_DNA"/>
</dbReference>
<dbReference type="EMBL" id="U73857">
    <property type="protein sequence ID" value="AAB18071.1"/>
    <property type="molecule type" value="Genomic_DNA"/>
</dbReference>
<dbReference type="EMBL" id="U00096">
    <property type="protein sequence ID" value="AAC73450.1"/>
    <property type="molecule type" value="Genomic_DNA"/>
</dbReference>
<dbReference type="EMBL" id="AP009048">
    <property type="protein sequence ID" value="BAE76129.1"/>
    <property type="molecule type" value="Genomic_DNA"/>
</dbReference>
<dbReference type="PIR" id="C64762">
    <property type="entry name" value="C64762"/>
</dbReference>
<dbReference type="RefSeq" id="NP_414881.1">
    <property type="nucleotide sequence ID" value="NC_000913.3"/>
</dbReference>
<dbReference type="RefSeq" id="WP_001007407.1">
    <property type="nucleotide sequence ID" value="NZ_SSZK01000061.1"/>
</dbReference>
<dbReference type="SMR" id="P77397"/>
<dbReference type="BioGRID" id="4260728">
    <property type="interactions" value="17"/>
</dbReference>
<dbReference type="BioGRID" id="849583">
    <property type="interactions" value="1"/>
</dbReference>
<dbReference type="FunCoup" id="P77397">
    <property type="interactions" value="650"/>
</dbReference>
<dbReference type="IntAct" id="P77397">
    <property type="interactions" value="3"/>
</dbReference>
<dbReference type="STRING" id="511145.b0347"/>
<dbReference type="PaxDb" id="511145-b0347"/>
<dbReference type="EnsemblBacteria" id="AAC73450">
    <property type="protein sequence ID" value="AAC73450"/>
    <property type="gene ID" value="b0347"/>
</dbReference>
<dbReference type="GeneID" id="945197"/>
<dbReference type="KEGG" id="ecj:JW0338"/>
<dbReference type="KEGG" id="eco:b0347"/>
<dbReference type="KEGG" id="ecoc:C3026_24870"/>
<dbReference type="PATRIC" id="fig|1411691.4.peg.1931"/>
<dbReference type="EchoBASE" id="EB4166"/>
<dbReference type="eggNOG" id="COG0654">
    <property type="taxonomic scope" value="Bacteria"/>
</dbReference>
<dbReference type="HOGENOM" id="CLU_009665_20_2_6"/>
<dbReference type="InParanoid" id="P77397"/>
<dbReference type="OMA" id="DFIAPHS"/>
<dbReference type="OrthoDB" id="8672648at2"/>
<dbReference type="PhylomeDB" id="P77397"/>
<dbReference type="BioCyc" id="EcoCyc:MHPHYDROXY-MONOMER"/>
<dbReference type="BioCyc" id="MetaCyc:MHPHYDROXY-MONOMER"/>
<dbReference type="UniPathway" id="UPA00714"/>
<dbReference type="PRO" id="PR:P77397"/>
<dbReference type="Proteomes" id="UP000000625">
    <property type="component" value="Chromosome"/>
</dbReference>
<dbReference type="GO" id="GO:0008688">
    <property type="term" value="F:3-(3-hydroxyphenyl)propionate hydroxylase activity"/>
    <property type="evidence" value="ECO:0000314"/>
    <property type="project" value="EcoCyc"/>
</dbReference>
<dbReference type="GO" id="GO:0071949">
    <property type="term" value="F:FAD binding"/>
    <property type="evidence" value="ECO:0000314"/>
    <property type="project" value="EcoCyc"/>
</dbReference>
<dbReference type="GO" id="GO:0042802">
    <property type="term" value="F:identical protein binding"/>
    <property type="evidence" value="ECO:0000314"/>
    <property type="project" value="EcoCyc"/>
</dbReference>
<dbReference type="GO" id="GO:0019622">
    <property type="term" value="P:3-(3-hydroxy)phenylpropionate catabolic process"/>
    <property type="evidence" value="ECO:0000315"/>
    <property type="project" value="EcoCyc"/>
</dbReference>
<dbReference type="GO" id="GO:0019380">
    <property type="term" value="P:3-phenylpropionate catabolic process"/>
    <property type="evidence" value="ECO:0007669"/>
    <property type="project" value="UniProtKB-UniPathway"/>
</dbReference>
<dbReference type="FunFam" id="3.30.70.2450:FF:000001">
    <property type="entry name" value="3-(3-hydroxy-phenyl)propionate/3-hydroxycinnamic acid hydroxylase"/>
    <property type="match status" value="1"/>
</dbReference>
<dbReference type="FunFam" id="3.50.50.60:FF:000126">
    <property type="entry name" value="3-(3-hydroxy-phenyl)propionate/3-hydroxycinnamic acid hydroxylase"/>
    <property type="match status" value="1"/>
</dbReference>
<dbReference type="Gene3D" id="3.30.70.2450">
    <property type="match status" value="1"/>
</dbReference>
<dbReference type="Gene3D" id="3.50.50.60">
    <property type="entry name" value="FAD/NAD(P)-binding domain"/>
    <property type="match status" value="1"/>
</dbReference>
<dbReference type="HAMAP" id="MF_01652">
    <property type="entry name" value="MhpA"/>
    <property type="match status" value="1"/>
</dbReference>
<dbReference type="InterPro" id="IPR023786">
    <property type="entry name" value="3-HPP/3HCI_hydroxylase"/>
</dbReference>
<dbReference type="InterPro" id="IPR002938">
    <property type="entry name" value="FAD-bd"/>
</dbReference>
<dbReference type="InterPro" id="IPR036188">
    <property type="entry name" value="FAD/NAD-bd_sf"/>
</dbReference>
<dbReference type="InterPro" id="IPR050631">
    <property type="entry name" value="PheA/TfdB_FAD_monoxygenase"/>
</dbReference>
<dbReference type="NCBIfam" id="NF004827">
    <property type="entry name" value="PRK06183.1-1"/>
    <property type="match status" value="1"/>
</dbReference>
<dbReference type="NCBIfam" id="NF004829">
    <property type="entry name" value="PRK06183.1-3"/>
    <property type="match status" value="1"/>
</dbReference>
<dbReference type="NCBIfam" id="NF004831">
    <property type="entry name" value="PRK06183.1-5"/>
    <property type="match status" value="1"/>
</dbReference>
<dbReference type="PANTHER" id="PTHR43476">
    <property type="entry name" value="3-(3-HYDROXY-PHENYL)PROPIONATE/3-HYDROXYCINNAMIC ACID HYDROXYLASE"/>
    <property type="match status" value="1"/>
</dbReference>
<dbReference type="PANTHER" id="PTHR43476:SF3">
    <property type="entry name" value="FAD-BINDING MONOOXYGENASE"/>
    <property type="match status" value="1"/>
</dbReference>
<dbReference type="Pfam" id="PF01494">
    <property type="entry name" value="FAD_binding_3"/>
    <property type="match status" value="1"/>
</dbReference>
<dbReference type="PRINTS" id="PR00420">
    <property type="entry name" value="RNGMNOXGNASE"/>
</dbReference>
<dbReference type="SUPFAM" id="SSF51905">
    <property type="entry name" value="FAD/NAD(P)-binding domain"/>
    <property type="match status" value="1"/>
</dbReference>
<gene>
    <name type="primary">mhpA</name>
    <name type="ordered locus">b0347</name>
    <name type="ordered locus">JW0338</name>
</gene>